<protein>
    <recommendedName>
        <fullName evidence="1">Cobalt-precorrin-5B C(1)-methyltransferase</fullName>
        <ecNumber evidence="1">2.1.1.195</ecNumber>
    </recommendedName>
    <alternativeName>
        <fullName evidence="1">Cobalt-precorrin-6A synthase</fullName>
    </alternativeName>
</protein>
<dbReference type="EC" id="2.1.1.195" evidence="1"/>
<dbReference type="EMBL" id="CP000482">
    <property type="protein sequence ID" value="ABK98917.1"/>
    <property type="molecule type" value="Genomic_DNA"/>
</dbReference>
<dbReference type="RefSeq" id="WP_011735219.1">
    <property type="nucleotide sequence ID" value="NC_008609.1"/>
</dbReference>
<dbReference type="SMR" id="A1ANJ7"/>
<dbReference type="STRING" id="338966.Ppro_1297"/>
<dbReference type="KEGG" id="ppd:Ppro_1297"/>
<dbReference type="eggNOG" id="COG1903">
    <property type="taxonomic scope" value="Bacteria"/>
</dbReference>
<dbReference type="HOGENOM" id="CLU_041273_0_0_7"/>
<dbReference type="OrthoDB" id="6439987at2"/>
<dbReference type="UniPathway" id="UPA00148">
    <property type="reaction ID" value="UER00227"/>
</dbReference>
<dbReference type="Proteomes" id="UP000006732">
    <property type="component" value="Chromosome"/>
</dbReference>
<dbReference type="GO" id="GO:0043780">
    <property type="term" value="F:cobalt-precorrin-5B C1-methyltransferase activity"/>
    <property type="evidence" value="ECO:0007669"/>
    <property type="project" value="RHEA"/>
</dbReference>
<dbReference type="GO" id="GO:0019251">
    <property type="term" value="P:anaerobic cobalamin biosynthetic process"/>
    <property type="evidence" value="ECO:0007669"/>
    <property type="project" value="UniProtKB-UniRule"/>
</dbReference>
<dbReference type="GO" id="GO:0032259">
    <property type="term" value="P:methylation"/>
    <property type="evidence" value="ECO:0007669"/>
    <property type="project" value="UniProtKB-KW"/>
</dbReference>
<dbReference type="Gene3D" id="3.30.2110.10">
    <property type="entry name" value="CbiD-like"/>
    <property type="match status" value="1"/>
</dbReference>
<dbReference type="HAMAP" id="MF_00787">
    <property type="entry name" value="CbiD"/>
    <property type="match status" value="1"/>
</dbReference>
<dbReference type="InterPro" id="IPR002748">
    <property type="entry name" value="CbiD"/>
</dbReference>
<dbReference type="InterPro" id="IPR036074">
    <property type="entry name" value="CbiD_sf"/>
</dbReference>
<dbReference type="NCBIfam" id="TIGR00312">
    <property type="entry name" value="cbiD"/>
    <property type="match status" value="1"/>
</dbReference>
<dbReference type="PANTHER" id="PTHR35863">
    <property type="entry name" value="COBALT-PRECORRIN-5B C(1)-METHYLTRANSFERASE"/>
    <property type="match status" value="1"/>
</dbReference>
<dbReference type="PANTHER" id="PTHR35863:SF1">
    <property type="entry name" value="COBALT-PRECORRIN-5B C(1)-METHYLTRANSFERASE"/>
    <property type="match status" value="1"/>
</dbReference>
<dbReference type="Pfam" id="PF01888">
    <property type="entry name" value="CbiD"/>
    <property type="match status" value="1"/>
</dbReference>
<dbReference type="PIRSF" id="PIRSF026782">
    <property type="entry name" value="CbiD"/>
    <property type="match status" value="1"/>
</dbReference>
<dbReference type="SUPFAM" id="SSF111342">
    <property type="entry name" value="CbiD-like"/>
    <property type="match status" value="1"/>
</dbReference>
<gene>
    <name evidence="1" type="primary">cbiD</name>
    <name type="ordered locus">Ppro_1297</name>
</gene>
<evidence type="ECO:0000255" key="1">
    <source>
        <dbReference type="HAMAP-Rule" id="MF_00787"/>
    </source>
</evidence>
<proteinExistence type="inferred from homology"/>
<organism>
    <name type="scientific">Pelobacter propionicus (strain DSM 2379 / NBRC 103807 / OttBd1)</name>
    <dbReference type="NCBI Taxonomy" id="338966"/>
    <lineage>
        <taxon>Bacteria</taxon>
        <taxon>Pseudomonadati</taxon>
        <taxon>Thermodesulfobacteriota</taxon>
        <taxon>Desulfuromonadia</taxon>
        <taxon>Desulfuromonadales</taxon>
        <taxon>Desulfuromonadaceae</taxon>
        <taxon>Pelobacter</taxon>
    </lineage>
</organism>
<sequence length="392" mass="41487">MKRESSTQLRAGFTTGTCAAAAAKGAALMLRDQCLCDQVTLRLPTGISATFRLEGQEFSSSSASCFVVKDAGDDPDITNGAELHARVTVPPPLPLAQGDMVEITGGTGIGRATKPGLAVAPGEWAINPVPRRMIQEAVGEVFADRRVLVQISIPDGELRAQKTLNARLGILGGLSILGTTGIVRPISAKAWTDTIDTALDVARACGCATVVFSTGRTSELAAQEWLKVRGARFDFGDQESGNADREPGTMYLEPLPEEAFVMMGDHVAHALRSARERGFHQPVIACQYAKLVKIACGYENTHAAASDMDLARLRAWAVEAELPSRVVETIASANTAREIAVSTGFDPALLTLTARKALQASQGHATGAHPLFVVADYGGRIVFHSLPAENNA</sequence>
<comment type="function">
    <text evidence="1">Catalyzes the methylation of C-1 in cobalt-precorrin-5B to form cobalt-precorrin-6A.</text>
</comment>
<comment type="catalytic activity">
    <reaction evidence="1">
        <text>Co-precorrin-5B + S-adenosyl-L-methionine = Co-precorrin-6A + S-adenosyl-L-homocysteine</text>
        <dbReference type="Rhea" id="RHEA:26285"/>
        <dbReference type="ChEBI" id="CHEBI:57856"/>
        <dbReference type="ChEBI" id="CHEBI:59789"/>
        <dbReference type="ChEBI" id="CHEBI:60063"/>
        <dbReference type="ChEBI" id="CHEBI:60064"/>
        <dbReference type="EC" id="2.1.1.195"/>
    </reaction>
</comment>
<comment type="pathway">
    <text evidence="1">Cofactor biosynthesis; adenosylcobalamin biosynthesis; cob(II)yrinate a,c-diamide from sirohydrochlorin (anaerobic route): step 6/10.</text>
</comment>
<comment type="similarity">
    <text evidence="1">Belongs to the CbiD family.</text>
</comment>
<keyword id="KW-0169">Cobalamin biosynthesis</keyword>
<keyword id="KW-0489">Methyltransferase</keyword>
<keyword id="KW-1185">Reference proteome</keyword>
<keyword id="KW-0949">S-adenosyl-L-methionine</keyword>
<keyword id="KW-0808">Transferase</keyword>
<reference key="1">
    <citation type="submission" date="2006-10" db="EMBL/GenBank/DDBJ databases">
        <title>Complete sequence of chromosome of Pelobacter propionicus DSM 2379.</title>
        <authorList>
            <consortium name="US DOE Joint Genome Institute"/>
            <person name="Copeland A."/>
            <person name="Lucas S."/>
            <person name="Lapidus A."/>
            <person name="Barry K."/>
            <person name="Detter J.C."/>
            <person name="Glavina del Rio T."/>
            <person name="Hammon N."/>
            <person name="Israni S."/>
            <person name="Dalin E."/>
            <person name="Tice H."/>
            <person name="Pitluck S."/>
            <person name="Saunders E."/>
            <person name="Brettin T."/>
            <person name="Bruce D."/>
            <person name="Han C."/>
            <person name="Tapia R."/>
            <person name="Schmutz J."/>
            <person name="Larimer F."/>
            <person name="Land M."/>
            <person name="Hauser L."/>
            <person name="Kyrpides N."/>
            <person name="Kim E."/>
            <person name="Lovley D."/>
            <person name="Richardson P."/>
        </authorList>
    </citation>
    <scope>NUCLEOTIDE SEQUENCE [LARGE SCALE GENOMIC DNA]</scope>
    <source>
        <strain>DSM 2379 / NBRC 103807 / OttBd1</strain>
    </source>
</reference>
<feature type="chain" id="PRO_1000046869" description="Cobalt-precorrin-5B C(1)-methyltransferase">
    <location>
        <begin position="1"/>
        <end position="392"/>
    </location>
</feature>
<accession>A1ANJ7</accession>
<name>CBID_PELPD</name>